<keyword id="KW-1185">Reference proteome</keyword>
<keyword id="KW-0687">Ribonucleoprotein</keyword>
<keyword id="KW-0689">Ribosomal protein</keyword>
<keyword id="KW-0694">RNA-binding</keyword>
<keyword id="KW-0699">rRNA-binding</keyword>
<gene>
    <name evidence="1" type="primary">rpsR</name>
    <name type="ordered locus">Clos_0037</name>
</gene>
<dbReference type="EMBL" id="CP000853">
    <property type="protein sequence ID" value="ABW17607.1"/>
    <property type="molecule type" value="Genomic_DNA"/>
</dbReference>
<dbReference type="RefSeq" id="WP_012157922.1">
    <property type="nucleotide sequence ID" value="NC_009922.1"/>
</dbReference>
<dbReference type="SMR" id="A8MED6"/>
<dbReference type="STRING" id="350688.Clos_0037"/>
<dbReference type="KEGG" id="aoe:Clos_0037"/>
<dbReference type="eggNOG" id="COG0238">
    <property type="taxonomic scope" value="Bacteria"/>
</dbReference>
<dbReference type="HOGENOM" id="CLU_148710_2_2_9"/>
<dbReference type="OrthoDB" id="9812008at2"/>
<dbReference type="Proteomes" id="UP000000269">
    <property type="component" value="Chromosome"/>
</dbReference>
<dbReference type="GO" id="GO:0022627">
    <property type="term" value="C:cytosolic small ribosomal subunit"/>
    <property type="evidence" value="ECO:0007669"/>
    <property type="project" value="TreeGrafter"/>
</dbReference>
<dbReference type="GO" id="GO:0070181">
    <property type="term" value="F:small ribosomal subunit rRNA binding"/>
    <property type="evidence" value="ECO:0007669"/>
    <property type="project" value="TreeGrafter"/>
</dbReference>
<dbReference type="GO" id="GO:0003735">
    <property type="term" value="F:structural constituent of ribosome"/>
    <property type="evidence" value="ECO:0007669"/>
    <property type="project" value="InterPro"/>
</dbReference>
<dbReference type="GO" id="GO:0006412">
    <property type="term" value="P:translation"/>
    <property type="evidence" value="ECO:0007669"/>
    <property type="project" value="UniProtKB-UniRule"/>
</dbReference>
<dbReference type="FunFam" id="4.10.640.10:FF:000004">
    <property type="entry name" value="30S ribosomal protein S18"/>
    <property type="match status" value="1"/>
</dbReference>
<dbReference type="Gene3D" id="4.10.640.10">
    <property type="entry name" value="Ribosomal protein S18"/>
    <property type="match status" value="1"/>
</dbReference>
<dbReference type="HAMAP" id="MF_00270">
    <property type="entry name" value="Ribosomal_bS18"/>
    <property type="match status" value="1"/>
</dbReference>
<dbReference type="InterPro" id="IPR001648">
    <property type="entry name" value="Ribosomal_bS18"/>
</dbReference>
<dbReference type="InterPro" id="IPR018275">
    <property type="entry name" value="Ribosomal_bS18_CS"/>
</dbReference>
<dbReference type="InterPro" id="IPR036870">
    <property type="entry name" value="Ribosomal_bS18_sf"/>
</dbReference>
<dbReference type="NCBIfam" id="TIGR00165">
    <property type="entry name" value="S18"/>
    <property type="match status" value="1"/>
</dbReference>
<dbReference type="PANTHER" id="PTHR13479">
    <property type="entry name" value="30S RIBOSOMAL PROTEIN S18"/>
    <property type="match status" value="1"/>
</dbReference>
<dbReference type="PANTHER" id="PTHR13479:SF40">
    <property type="entry name" value="SMALL RIBOSOMAL SUBUNIT PROTEIN BS18M"/>
    <property type="match status" value="1"/>
</dbReference>
<dbReference type="Pfam" id="PF01084">
    <property type="entry name" value="Ribosomal_S18"/>
    <property type="match status" value="1"/>
</dbReference>
<dbReference type="PRINTS" id="PR00974">
    <property type="entry name" value="RIBOSOMALS18"/>
</dbReference>
<dbReference type="SUPFAM" id="SSF46911">
    <property type="entry name" value="Ribosomal protein S18"/>
    <property type="match status" value="1"/>
</dbReference>
<dbReference type="PROSITE" id="PS00057">
    <property type="entry name" value="RIBOSOMAL_S18"/>
    <property type="match status" value="1"/>
</dbReference>
<comment type="function">
    <text evidence="1">Binds as a heterodimer with protein bS6 to the central domain of the 16S rRNA, where it helps stabilize the platform of the 30S subunit.</text>
</comment>
<comment type="subunit">
    <text evidence="1">Part of the 30S ribosomal subunit. Forms a tight heterodimer with protein bS6.</text>
</comment>
<comment type="similarity">
    <text evidence="1">Belongs to the bacterial ribosomal protein bS18 family.</text>
</comment>
<protein>
    <recommendedName>
        <fullName evidence="1">Small ribosomal subunit protein bS18</fullName>
    </recommendedName>
    <alternativeName>
        <fullName evidence="2">30S ribosomal protein S18</fullName>
    </alternativeName>
</protein>
<proteinExistence type="inferred from homology"/>
<reference key="1">
    <citation type="submission" date="2007-10" db="EMBL/GenBank/DDBJ databases">
        <title>Complete genome of Alkaliphilus oremlandii OhILAs.</title>
        <authorList>
            <person name="Copeland A."/>
            <person name="Lucas S."/>
            <person name="Lapidus A."/>
            <person name="Barry K."/>
            <person name="Detter J.C."/>
            <person name="Glavina del Rio T."/>
            <person name="Hammon N."/>
            <person name="Israni S."/>
            <person name="Dalin E."/>
            <person name="Tice H."/>
            <person name="Pitluck S."/>
            <person name="Chain P."/>
            <person name="Malfatti S."/>
            <person name="Shin M."/>
            <person name="Vergez L."/>
            <person name="Schmutz J."/>
            <person name="Larimer F."/>
            <person name="Land M."/>
            <person name="Hauser L."/>
            <person name="Kyrpides N."/>
            <person name="Mikhailova N."/>
            <person name="Stolz J.F."/>
            <person name="Dawson A."/>
            <person name="Fisher E."/>
            <person name="Crable B."/>
            <person name="Perera E."/>
            <person name="Lisak J."/>
            <person name="Ranganathan M."/>
            <person name="Basu P."/>
            <person name="Richardson P."/>
        </authorList>
    </citation>
    <scope>NUCLEOTIDE SEQUENCE [LARGE SCALE GENOMIC DNA]</scope>
    <source>
        <strain>OhILAs</strain>
    </source>
</reference>
<name>RS18_ALKOO</name>
<accession>A8MED6</accession>
<organism>
    <name type="scientific">Alkaliphilus oremlandii (strain OhILAs)</name>
    <name type="common">Clostridium oremlandii (strain OhILAs)</name>
    <dbReference type="NCBI Taxonomy" id="350688"/>
    <lineage>
        <taxon>Bacteria</taxon>
        <taxon>Bacillati</taxon>
        <taxon>Bacillota</taxon>
        <taxon>Clostridia</taxon>
        <taxon>Peptostreptococcales</taxon>
        <taxon>Natronincolaceae</taxon>
        <taxon>Alkaliphilus</taxon>
    </lineage>
</organism>
<evidence type="ECO:0000255" key="1">
    <source>
        <dbReference type="HAMAP-Rule" id="MF_00270"/>
    </source>
</evidence>
<evidence type="ECO:0000305" key="2"/>
<feature type="chain" id="PRO_0000345435" description="Small ribosomal subunit protein bS18">
    <location>
        <begin position="1"/>
        <end position="78"/>
    </location>
</feature>
<sequence length="78" mass="9299">MMENNKRKRKARKKICVFCADKSKNIDYKDVHKLKKYITERGKILPRRISGNCAIHQRELTQAIKRSRHIALLPYTMD</sequence>